<dbReference type="EMBL" id="D63838">
    <property type="protein sequence ID" value="BAA09896.1"/>
    <property type="molecule type" value="Genomic_DNA"/>
</dbReference>
<dbReference type="EMBL" id="BA000022">
    <property type="protein sequence ID" value="BAA16993.1"/>
    <property type="molecule type" value="Genomic_DNA"/>
</dbReference>
<dbReference type="PIR" id="S74953">
    <property type="entry name" value="S74953"/>
</dbReference>
<dbReference type="IntAct" id="P75028">
    <property type="interactions" value="16"/>
</dbReference>
<dbReference type="STRING" id="1148.gene:10497854"/>
<dbReference type="TCDB" id="9.B.73.1.2">
    <property type="family name" value="the chloroplast envelope/cyanobacterial membrane protein (cema) family"/>
</dbReference>
<dbReference type="PaxDb" id="1148-1652068"/>
<dbReference type="EnsemblBacteria" id="BAA16993">
    <property type="protein sequence ID" value="BAA16993"/>
    <property type="gene ID" value="BAA16993"/>
</dbReference>
<dbReference type="KEGG" id="syn:slr1596"/>
<dbReference type="eggNOG" id="ENOG502Z8DN">
    <property type="taxonomic scope" value="Bacteria"/>
</dbReference>
<dbReference type="InParanoid" id="P75028"/>
<dbReference type="PhylomeDB" id="P75028"/>
<dbReference type="Proteomes" id="UP000001425">
    <property type="component" value="Chromosome"/>
</dbReference>
<dbReference type="GO" id="GO:0005886">
    <property type="term" value="C:plasma membrane"/>
    <property type="evidence" value="ECO:0007669"/>
    <property type="project" value="UniProtKB-SubCell"/>
</dbReference>
<dbReference type="GO" id="GO:0015078">
    <property type="term" value="F:proton transmembrane transporter activity"/>
    <property type="evidence" value="ECO:0007669"/>
    <property type="project" value="UniProtKB-UniRule"/>
</dbReference>
<dbReference type="HAMAP" id="MF_01308">
    <property type="entry name" value="CemA_PxcA"/>
    <property type="match status" value="1"/>
</dbReference>
<dbReference type="InterPro" id="IPR004282">
    <property type="entry name" value="CemA"/>
</dbReference>
<dbReference type="NCBIfam" id="NF002703">
    <property type="entry name" value="PRK02507.1-1"/>
    <property type="match status" value="1"/>
</dbReference>
<dbReference type="PANTHER" id="PTHR33650:SF2">
    <property type="entry name" value="CHLOROPLAST ENVELOPE MEMBRANE PROTEIN"/>
    <property type="match status" value="1"/>
</dbReference>
<dbReference type="PANTHER" id="PTHR33650">
    <property type="entry name" value="CHLOROPLAST ENVELOPE MEMBRANE PROTEIN-RELATED"/>
    <property type="match status" value="1"/>
</dbReference>
<dbReference type="Pfam" id="PF03040">
    <property type="entry name" value="CemA"/>
    <property type="match status" value="1"/>
</dbReference>
<feature type="chain" id="PRO_0000216670" description="Proton extrusion protein PxcA">
    <location>
        <begin position="1"/>
        <end position="440"/>
    </location>
</feature>
<feature type="transmembrane region" description="Helical" evidence="1">
    <location>
        <begin position="222"/>
        <end position="242"/>
    </location>
</feature>
<feature type="transmembrane region" description="Helical" evidence="1">
    <location>
        <begin position="316"/>
        <end position="336"/>
    </location>
</feature>
<feature type="transmembrane region" description="Helical" evidence="1">
    <location>
        <begin position="352"/>
        <end position="374"/>
    </location>
</feature>
<feature type="transmembrane region" description="Helical" evidence="1">
    <location>
        <begin position="400"/>
        <end position="420"/>
    </location>
</feature>
<name>PXCA_SYNY3</name>
<comment type="function">
    <text evidence="1 2 3 4 6">Required for H(+) efflux immediately after light irradiation to form a rapid H(+) concentration gradient across the thylakoid membranes (PubMed:32619428). Together with PxcL, contributes to transient H(+) uptake following dark to light transition (By similarity) (PubMed:32619428, PubMed:8633006, PubMed:8808935, PubMed:9683474). Involved in light-induced Na(+)-dependent proton extrusion (PubMed:8808935, PubMed:9683474). Also seems to be involved in CO(2) transport (PubMed:32619428, PubMed:8633006).</text>
</comment>
<comment type="subcellular location">
    <subcellularLocation>
        <location evidence="1 5">Cell inner membrane</location>
        <topology evidence="1 10">Multi-pass membrane protein</topology>
    </subcellularLocation>
</comment>
<comment type="disruption phenotype">
    <text evidence="2 3 4 5 6">Loss of light-induced proton extrusion, grows poorly at low pH or in low Na(+) medium (PubMed:8633006, PubMed:8808935, PubMed:9190798, PubMed:9683474). Relaxed light-induced H(+) extrusion activity. H(+) influx activity is also partially diminished (PubMed:32619428). The double mutant missing both PxcA and PxcL is impaired for light-induced H(+) extrusion and later exhibits lower H(+) uptake activity (PubMed:32619428). The double mutant missing both PxcA and FlpA has both reduced light-induced H(+) extrusion and later lower H(+) uptake activity (PubMed:32619428, PubMed:8633006, PubMed:8808935, PubMed:9190798, PubMed:9683474).</text>
</comment>
<comment type="similarity">
    <text evidence="1">Belongs to the CemA family.</text>
</comment>
<protein>
    <recommendedName>
        <fullName evidence="1 9">Proton extrusion protein PxcA</fullName>
    </recommendedName>
</protein>
<sequence length="440" mass="51117">MDLTNWWQGATQWFGRSSQKSLEQAFRSALKIKEIEDQYFQGKKIGPENCDYSADTVTYFANQIQRHLRKIEQEIYHLNSDQEFVKILSLDPAVKQDPQTEYVLNQLQFIDDILQRYDGELPQVSPPKQIANGGVLDLPAITANKQRQINKKRRDGFQYIRREDTQQKVDTATQKSGVLPRSFLRTIDRLKREMDPQSSDTEQKVLKQYRNSRYKTALSIKFVLTLIIVPLLAHQLTKTFFLLPSVESFFERNSEVVFINQSMETEAYEELSHFEESLRFRELLGFGEKLSPEAKEEKLAEKAKEISESYRRVSTNAIANIFADIFSLVAFSLVLVNSQREIEVLKEFIDEIVYGLSDSAKAFLIILFTDMFVGFHSPHGWEVILASIARHFGLPENQDFNFLFIATFPVILDTVFKYWIFRYLNSISPSAVATYRNMNE</sequence>
<gene>
    <name evidence="1 9" type="primary">pxcA</name>
    <name evidence="8" type="synonym">cotA</name>
    <name evidence="7" type="ordered locus">slr1596</name>
</gene>
<proteinExistence type="inferred from homology"/>
<organism>
    <name type="scientific">Synechocystis sp. (strain ATCC 27184 / PCC 6803 / Kazusa)</name>
    <dbReference type="NCBI Taxonomy" id="1111708"/>
    <lineage>
        <taxon>Bacteria</taxon>
        <taxon>Bacillati</taxon>
        <taxon>Cyanobacteriota</taxon>
        <taxon>Cyanophyceae</taxon>
        <taxon>Synechococcales</taxon>
        <taxon>Merismopediaceae</taxon>
        <taxon>Synechocystis</taxon>
    </lineage>
</organism>
<keyword id="KW-0997">Cell inner membrane</keyword>
<keyword id="KW-1003">Cell membrane</keyword>
<keyword id="KW-0375">Hydrogen ion transport</keyword>
<keyword id="KW-0406">Ion transport</keyword>
<keyword id="KW-0472">Membrane</keyword>
<keyword id="KW-1185">Reference proteome</keyword>
<keyword id="KW-0812">Transmembrane</keyword>
<keyword id="KW-1133">Transmembrane helix</keyword>
<keyword id="KW-0813">Transport</keyword>
<reference key="1">
    <citation type="journal article" date="1996" name="Proc. Natl. Acad. Sci. U.S.A.">
        <title>cemA homologue essential to CO2 transport in the cyanobacterium Synechocystis PCC6803.</title>
        <authorList>
            <person name="Katoh A."/>
            <person name="Lee K.S."/>
            <person name="Fukuzawa H."/>
            <person name="Ohyama K."/>
            <person name="Ogawa T."/>
        </authorList>
    </citation>
    <scope>NUCLEOTIDE SEQUENCE [GENOMIC DNA]</scope>
    <scope>DISRUPTION PHENOTYPE</scope>
    <source>
        <strain>ATCC 27184 / PCC 6803 / Kazusa</strain>
    </source>
</reference>
<reference evidence="11" key="2">
    <citation type="journal article" date="1997" name="J. Bacteriol.">
        <title>Size of cotA and identification of the gene product in Synechocystis sp. strain PCC6803.</title>
        <authorList>
            <person name="Sonoda M."/>
            <person name="Kitano K."/>
            <person name="Katoh A."/>
            <person name="Katoh H."/>
            <person name="Ohkawa H."/>
            <person name="Ogawa T."/>
        </authorList>
    </citation>
    <scope>SEQUENCE REVISION TO N-TERMINUS</scope>
    <scope>SUBCELLULAR LOCATION</scope>
    <scope>DISRUPTION PHENOTYPE</scope>
    <source>
        <strain>ATCC 27184 / PCC 6803 / Kazusa</strain>
    </source>
</reference>
<reference evidence="12" key="3">
    <citation type="journal article" date="1996" name="DNA Res.">
        <title>Sequence analysis of the genome of the unicellular cyanobacterium Synechocystis sp. strain PCC6803. II. Sequence determination of the entire genome and assignment of potential protein-coding regions.</title>
        <authorList>
            <person name="Kaneko T."/>
            <person name="Sato S."/>
            <person name="Kotani H."/>
            <person name="Tanaka A."/>
            <person name="Asamizu E."/>
            <person name="Nakamura Y."/>
            <person name="Miyajima N."/>
            <person name="Hirosawa M."/>
            <person name="Sugiura M."/>
            <person name="Sasamoto S."/>
            <person name="Kimura T."/>
            <person name="Hosouchi T."/>
            <person name="Matsuno A."/>
            <person name="Muraki A."/>
            <person name="Nakazaki N."/>
            <person name="Naruo K."/>
            <person name="Okumura S."/>
            <person name="Shimpo S."/>
            <person name="Takeuchi C."/>
            <person name="Wada T."/>
            <person name="Watanabe A."/>
            <person name="Yamada M."/>
            <person name="Yasuda M."/>
            <person name="Tabata S."/>
        </authorList>
    </citation>
    <scope>NUCLEOTIDE SEQUENCE [LARGE SCALE GENOMIC DNA]</scope>
    <source>
        <strain>ATCC 27184 / PCC 6803 / Kazusa</strain>
    </source>
</reference>
<reference key="4">
    <citation type="journal article" date="1996" name="J. Bacteriol.">
        <title>Absence of light-induced proton extrusion in a cotA-less mutant of Synechocystis sp. strain PCC6803.</title>
        <authorList>
            <person name="Katoh A."/>
            <person name="Sonoda M."/>
            <person name="Katoh H."/>
            <person name="Ogawa T."/>
        </authorList>
    </citation>
    <scope>FUNCTION</scope>
    <scope>DISRUPTION PHENOTYPE</scope>
    <source>
        <strain>ATCC 27184 / PCC 6803 / Kazusa</strain>
    </source>
</reference>
<reference key="5">
    <citation type="journal article" date="1998" name="J. Bacteriol.">
        <title>Photosynthetic electron transport involved in PxcA-dependent proton extrusion in Synechocystis sp. Strain PCC6803: effect of pxcA inactivation on CO2, HCO3-, and NO3- uptake.</title>
        <authorList>
            <person name="Sonoda M."/>
            <person name="Katoh H."/>
            <person name="Vermaas W."/>
            <person name="Schmetterer G."/>
            <person name="Ogawa T."/>
        </authorList>
    </citation>
    <scope>FUNCTION</scope>
    <scope>DISRUPTION PHENOTYPE</scope>
    <source>
        <strain>ATCC 27184 / PCC 6803 / Kazusa</strain>
    </source>
</reference>
<reference key="6">
    <citation type="journal article" date="2020" name="Biochim. Biophys. Acta">
        <title>Regulation of light-induced H+ extrusion and uptake by cyanobacterial homologs of the plastidial FLAP1, DLDG1, and Ycf10 in Synechocystis sp. PCC6803.</title>
        <authorList>
            <person name="Inago H."/>
            <person name="Sato R."/>
            <person name="Masuda S."/>
        </authorList>
    </citation>
    <scope>FUNCTION</scope>
    <scope>DISRUPTION PHENOTYPE</scope>
    <source>
        <strain>ATCC 27184 / PCC 6803 / Kazusa</strain>
    </source>
</reference>
<accession>P75028</accession>
<evidence type="ECO:0000255" key="1">
    <source>
        <dbReference type="HAMAP-Rule" id="MF_01308"/>
    </source>
</evidence>
<evidence type="ECO:0000269" key="2">
    <source>
    </source>
</evidence>
<evidence type="ECO:0000269" key="3">
    <source>
    </source>
</evidence>
<evidence type="ECO:0000269" key="4">
    <source>
    </source>
</evidence>
<evidence type="ECO:0000269" key="5">
    <source>
    </source>
</evidence>
<evidence type="ECO:0000269" key="6">
    <source>
    </source>
</evidence>
<evidence type="ECO:0000303" key="7">
    <source>
    </source>
</evidence>
<evidence type="ECO:0000303" key="8">
    <source>
    </source>
</evidence>
<evidence type="ECO:0000303" key="9">
    <source>
    </source>
</evidence>
<evidence type="ECO:0000305" key="10">
    <source>
    </source>
</evidence>
<evidence type="ECO:0000312" key="11">
    <source>
        <dbReference type="EMBL" id="BAA09896.1"/>
    </source>
</evidence>
<evidence type="ECO:0000312" key="12">
    <source>
        <dbReference type="EMBL" id="BAA16993.1"/>
    </source>
</evidence>